<feature type="chain" id="PRO_1000199044" description="Cysteine--tRNA ligase">
    <location>
        <begin position="1"/>
        <end position="474"/>
    </location>
</feature>
<feature type="short sequence motif" description="'HIGH' region">
    <location>
        <begin position="32"/>
        <end position="42"/>
    </location>
</feature>
<feature type="short sequence motif" description="'KMSKS' region">
    <location>
        <begin position="272"/>
        <end position="276"/>
    </location>
</feature>
<feature type="binding site" evidence="1">
    <location>
        <position position="30"/>
    </location>
    <ligand>
        <name>Zn(2+)</name>
        <dbReference type="ChEBI" id="CHEBI:29105"/>
    </ligand>
</feature>
<feature type="binding site" evidence="1">
    <location>
        <position position="215"/>
    </location>
    <ligand>
        <name>Zn(2+)</name>
        <dbReference type="ChEBI" id="CHEBI:29105"/>
    </ligand>
</feature>
<feature type="binding site" evidence="1">
    <location>
        <position position="240"/>
    </location>
    <ligand>
        <name>Zn(2+)</name>
        <dbReference type="ChEBI" id="CHEBI:29105"/>
    </ligand>
</feature>
<feature type="binding site" evidence="1">
    <location>
        <position position="244"/>
    </location>
    <ligand>
        <name>Zn(2+)</name>
        <dbReference type="ChEBI" id="CHEBI:29105"/>
    </ligand>
</feature>
<feature type="binding site" evidence="1">
    <location>
        <position position="275"/>
    </location>
    <ligand>
        <name>ATP</name>
        <dbReference type="ChEBI" id="CHEBI:30616"/>
    </ligand>
</feature>
<protein>
    <recommendedName>
        <fullName evidence="1">Cysteine--tRNA ligase</fullName>
        <ecNumber evidence="1">6.1.1.16</ecNumber>
    </recommendedName>
    <alternativeName>
        <fullName evidence="1">Cysteinyl-tRNA synthetase</fullName>
        <shortName evidence="1">CysRS</shortName>
    </alternativeName>
</protein>
<evidence type="ECO:0000255" key="1">
    <source>
        <dbReference type="HAMAP-Rule" id="MF_00041"/>
    </source>
</evidence>
<proteinExistence type="inferred from homology"/>
<accession>C0R1J9</accession>
<reference key="1">
    <citation type="journal article" date="2009" name="PLoS ONE">
        <title>Genome sequence of the pathogenic intestinal spirochete Brachyspira hyodysenteriae reveals adaptations to its lifestyle in the porcine large intestine.</title>
        <authorList>
            <person name="Bellgard M.I."/>
            <person name="Wanchanthuek P."/>
            <person name="La T."/>
            <person name="Ryan K."/>
            <person name="Moolhuijzen P."/>
            <person name="Albertyn Z."/>
            <person name="Shaban B."/>
            <person name="Motro Y."/>
            <person name="Dunn D.S."/>
            <person name="Schibeci D."/>
            <person name="Hunter A."/>
            <person name="Barrero R."/>
            <person name="Phillips N.D."/>
            <person name="Hampson D.J."/>
        </authorList>
    </citation>
    <scope>NUCLEOTIDE SEQUENCE [LARGE SCALE GENOMIC DNA]</scope>
    <source>
        <strain>ATCC 49526 / WA1</strain>
    </source>
</reference>
<keyword id="KW-0030">Aminoacyl-tRNA synthetase</keyword>
<keyword id="KW-0067">ATP-binding</keyword>
<keyword id="KW-0963">Cytoplasm</keyword>
<keyword id="KW-0436">Ligase</keyword>
<keyword id="KW-0479">Metal-binding</keyword>
<keyword id="KW-0547">Nucleotide-binding</keyword>
<keyword id="KW-0648">Protein biosynthesis</keyword>
<keyword id="KW-0862">Zinc</keyword>
<comment type="catalytic activity">
    <reaction evidence="1">
        <text>tRNA(Cys) + L-cysteine + ATP = L-cysteinyl-tRNA(Cys) + AMP + diphosphate</text>
        <dbReference type="Rhea" id="RHEA:17773"/>
        <dbReference type="Rhea" id="RHEA-COMP:9661"/>
        <dbReference type="Rhea" id="RHEA-COMP:9679"/>
        <dbReference type="ChEBI" id="CHEBI:30616"/>
        <dbReference type="ChEBI" id="CHEBI:33019"/>
        <dbReference type="ChEBI" id="CHEBI:35235"/>
        <dbReference type="ChEBI" id="CHEBI:78442"/>
        <dbReference type="ChEBI" id="CHEBI:78517"/>
        <dbReference type="ChEBI" id="CHEBI:456215"/>
        <dbReference type="EC" id="6.1.1.16"/>
    </reaction>
</comment>
<comment type="cofactor">
    <cofactor evidence="1">
        <name>Zn(2+)</name>
        <dbReference type="ChEBI" id="CHEBI:29105"/>
    </cofactor>
    <text evidence="1">Binds 1 zinc ion per subunit.</text>
</comment>
<comment type="subunit">
    <text evidence="1">Monomer.</text>
</comment>
<comment type="subcellular location">
    <subcellularLocation>
        <location evidence="1">Cytoplasm</location>
    </subcellularLocation>
</comment>
<comment type="similarity">
    <text evidence="1">Belongs to the class-I aminoacyl-tRNA synthetase family.</text>
</comment>
<dbReference type="EC" id="6.1.1.16" evidence="1"/>
<dbReference type="EMBL" id="CP001357">
    <property type="protein sequence ID" value="ACN83987.1"/>
    <property type="molecule type" value="Genomic_DNA"/>
</dbReference>
<dbReference type="RefSeq" id="WP_012671029.1">
    <property type="nucleotide sequence ID" value="NC_012225.1"/>
</dbReference>
<dbReference type="SMR" id="C0R1J9"/>
<dbReference type="STRING" id="565034.BHWA1_01517"/>
<dbReference type="KEGG" id="bhy:BHWA1_01517"/>
<dbReference type="eggNOG" id="COG0215">
    <property type="taxonomic scope" value="Bacteria"/>
</dbReference>
<dbReference type="HOGENOM" id="CLU_013528_0_1_12"/>
<dbReference type="Proteomes" id="UP000001803">
    <property type="component" value="Chromosome"/>
</dbReference>
<dbReference type="GO" id="GO:0005829">
    <property type="term" value="C:cytosol"/>
    <property type="evidence" value="ECO:0007669"/>
    <property type="project" value="TreeGrafter"/>
</dbReference>
<dbReference type="GO" id="GO:0005524">
    <property type="term" value="F:ATP binding"/>
    <property type="evidence" value="ECO:0007669"/>
    <property type="project" value="UniProtKB-UniRule"/>
</dbReference>
<dbReference type="GO" id="GO:0004817">
    <property type="term" value="F:cysteine-tRNA ligase activity"/>
    <property type="evidence" value="ECO:0007669"/>
    <property type="project" value="UniProtKB-UniRule"/>
</dbReference>
<dbReference type="GO" id="GO:0008270">
    <property type="term" value="F:zinc ion binding"/>
    <property type="evidence" value="ECO:0007669"/>
    <property type="project" value="UniProtKB-UniRule"/>
</dbReference>
<dbReference type="GO" id="GO:0006423">
    <property type="term" value="P:cysteinyl-tRNA aminoacylation"/>
    <property type="evidence" value="ECO:0007669"/>
    <property type="project" value="UniProtKB-UniRule"/>
</dbReference>
<dbReference type="CDD" id="cd00672">
    <property type="entry name" value="CysRS_core"/>
    <property type="match status" value="1"/>
</dbReference>
<dbReference type="FunFam" id="3.40.50.620:FF:000130">
    <property type="entry name" value="Cysteine--tRNA ligase"/>
    <property type="match status" value="1"/>
</dbReference>
<dbReference type="Gene3D" id="1.20.120.1910">
    <property type="entry name" value="Cysteine-tRNA ligase, C-terminal anti-codon recognition domain"/>
    <property type="match status" value="1"/>
</dbReference>
<dbReference type="Gene3D" id="3.40.50.620">
    <property type="entry name" value="HUPs"/>
    <property type="match status" value="1"/>
</dbReference>
<dbReference type="HAMAP" id="MF_00041">
    <property type="entry name" value="Cys_tRNA_synth"/>
    <property type="match status" value="1"/>
</dbReference>
<dbReference type="InterPro" id="IPR015803">
    <property type="entry name" value="Cys-tRNA-ligase"/>
</dbReference>
<dbReference type="InterPro" id="IPR024909">
    <property type="entry name" value="Cys-tRNA/MSH_ligase"/>
</dbReference>
<dbReference type="InterPro" id="IPR056411">
    <property type="entry name" value="CysS_C"/>
</dbReference>
<dbReference type="InterPro" id="IPR014729">
    <property type="entry name" value="Rossmann-like_a/b/a_fold"/>
</dbReference>
<dbReference type="InterPro" id="IPR032678">
    <property type="entry name" value="tRNA-synt_1_cat_dom"/>
</dbReference>
<dbReference type="InterPro" id="IPR009080">
    <property type="entry name" value="tRNAsynth_Ia_anticodon-bd"/>
</dbReference>
<dbReference type="NCBIfam" id="TIGR00435">
    <property type="entry name" value="cysS"/>
    <property type="match status" value="1"/>
</dbReference>
<dbReference type="PANTHER" id="PTHR10890:SF3">
    <property type="entry name" value="CYSTEINE--TRNA LIGASE, CYTOPLASMIC"/>
    <property type="match status" value="1"/>
</dbReference>
<dbReference type="PANTHER" id="PTHR10890">
    <property type="entry name" value="CYSTEINYL-TRNA SYNTHETASE"/>
    <property type="match status" value="1"/>
</dbReference>
<dbReference type="Pfam" id="PF23493">
    <property type="entry name" value="CysS_C"/>
    <property type="match status" value="1"/>
</dbReference>
<dbReference type="Pfam" id="PF01406">
    <property type="entry name" value="tRNA-synt_1e"/>
    <property type="match status" value="1"/>
</dbReference>
<dbReference type="PRINTS" id="PR00983">
    <property type="entry name" value="TRNASYNTHCYS"/>
</dbReference>
<dbReference type="SUPFAM" id="SSF47323">
    <property type="entry name" value="Anticodon-binding domain of a subclass of class I aminoacyl-tRNA synthetases"/>
    <property type="match status" value="1"/>
</dbReference>
<dbReference type="SUPFAM" id="SSF52374">
    <property type="entry name" value="Nucleotidylyl transferase"/>
    <property type="match status" value="1"/>
</dbReference>
<name>SYC_BRAHW</name>
<sequence length="474" mass="54760">MKDIVFYNSLTREKEVFKPINANEVGMYSCGPTVYNYAHIGNFRAYIFSDLLRRVLEDYGYNVKLVMNLTDVDDKTIKNSKENHISLNDYTKKYKEAFFEDIKTLGIKKATVNPAATDHIKEMINIIELLKKNGHTYESDGSVYFKISTFPQYGELANLDKQELLDGASGRVLNDEYDKENASDFVLWKAYTEDDGDVYWDSPFGKGRPGWHIECSAMSCKYLGKHFDIHTGGVDNKFPHHENEIAQNEAAFNEKFVNYWLHCEHLIVDGEKMSKSKGNFYTLRDLLDKGLSPEAIRYSLINSHYRKQLNFTIEGIKQSQSAIDRVNDLIFRLKDINNTESNEINENLLKELEVSNEKFSDSIYNDLNISEALGILFTLVKTVNTSFDSINVNTRDAILKFIERVNNIINCFNMGDTDKKSNNEDEDKINKLIEERTIAKKEKNYQKADEIRNQLLSMGIEIMDTPQGVKWKRK</sequence>
<gene>
    <name evidence="1" type="primary">cysS</name>
    <name type="ordered locus">BHWA1_01517</name>
</gene>
<organism>
    <name type="scientific">Brachyspira hyodysenteriae (strain ATCC 49526 / WA1)</name>
    <dbReference type="NCBI Taxonomy" id="565034"/>
    <lineage>
        <taxon>Bacteria</taxon>
        <taxon>Pseudomonadati</taxon>
        <taxon>Spirochaetota</taxon>
        <taxon>Spirochaetia</taxon>
        <taxon>Brachyspirales</taxon>
        <taxon>Brachyspiraceae</taxon>
        <taxon>Brachyspira</taxon>
    </lineage>
</organism>